<name>ECFA2_STAAC</name>
<gene>
    <name evidence="1" type="primary">ecfA2</name>
    <name type="synonym">cbiO2</name>
    <name type="ordered locus">SACOL2210</name>
</gene>
<organism>
    <name type="scientific">Staphylococcus aureus (strain COL)</name>
    <dbReference type="NCBI Taxonomy" id="93062"/>
    <lineage>
        <taxon>Bacteria</taxon>
        <taxon>Bacillati</taxon>
        <taxon>Bacillota</taxon>
        <taxon>Bacilli</taxon>
        <taxon>Bacillales</taxon>
        <taxon>Staphylococcaceae</taxon>
        <taxon>Staphylococcus</taxon>
    </lineage>
</organism>
<evidence type="ECO:0000255" key="1">
    <source>
        <dbReference type="HAMAP-Rule" id="MF_01710"/>
    </source>
</evidence>
<reference key="1">
    <citation type="journal article" date="2005" name="J. Bacteriol.">
        <title>Insights on evolution of virulence and resistance from the complete genome analysis of an early methicillin-resistant Staphylococcus aureus strain and a biofilm-producing methicillin-resistant Staphylococcus epidermidis strain.</title>
        <authorList>
            <person name="Gill S.R."/>
            <person name="Fouts D.E."/>
            <person name="Archer G.L."/>
            <person name="Mongodin E.F."/>
            <person name="DeBoy R.T."/>
            <person name="Ravel J."/>
            <person name="Paulsen I.T."/>
            <person name="Kolonay J.F."/>
            <person name="Brinkac L.M."/>
            <person name="Beanan M.J."/>
            <person name="Dodson R.J."/>
            <person name="Daugherty S.C."/>
            <person name="Madupu R."/>
            <person name="Angiuoli S.V."/>
            <person name="Durkin A.S."/>
            <person name="Haft D.H."/>
            <person name="Vamathevan J.J."/>
            <person name="Khouri H."/>
            <person name="Utterback T.R."/>
            <person name="Lee C."/>
            <person name="Dimitrov G."/>
            <person name="Jiang L."/>
            <person name="Qin H."/>
            <person name="Weidman J."/>
            <person name="Tran K."/>
            <person name="Kang K.H."/>
            <person name="Hance I.R."/>
            <person name="Nelson K.E."/>
            <person name="Fraser C.M."/>
        </authorList>
    </citation>
    <scope>NUCLEOTIDE SEQUENCE [LARGE SCALE GENOMIC DNA]</scope>
    <source>
        <strain>COL</strain>
    </source>
</reference>
<keyword id="KW-0067">ATP-binding</keyword>
<keyword id="KW-1003">Cell membrane</keyword>
<keyword id="KW-0472">Membrane</keyword>
<keyword id="KW-0547">Nucleotide-binding</keyword>
<keyword id="KW-1278">Translocase</keyword>
<keyword id="KW-0813">Transport</keyword>
<comment type="function">
    <text evidence="1">ATP-binding (A) component of a common energy-coupling factor (ECF) ABC-transporter complex. Unlike classic ABC transporters this ECF transporter provides the energy necessary to transport a number of different substrates.</text>
</comment>
<comment type="subunit">
    <text evidence="1">Forms a stable energy-coupling factor (ECF) transporter complex composed of 2 membrane-embedded substrate-binding proteins (S component), 2 ATP-binding proteins (A component) and 2 transmembrane proteins (T component).</text>
</comment>
<comment type="subcellular location">
    <subcellularLocation>
        <location evidence="1">Cell membrane</location>
        <topology evidence="1">Peripheral membrane protein</topology>
    </subcellularLocation>
</comment>
<comment type="similarity">
    <text evidence="1">Belongs to the ABC transporter superfamily. Energy-coupling factor EcfA family.</text>
</comment>
<accession>Q5HDY7</accession>
<protein>
    <recommendedName>
        <fullName evidence="1">Energy-coupling factor transporter ATP-binding protein EcfA2</fullName>
        <shortName evidence="1">ECF transporter A component EcfA2</shortName>
        <ecNumber evidence="1">7.-.-.-</ecNumber>
    </recommendedName>
</protein>
<proteinExistence type="inferred from homology"/>
<sequence length="286" mass="32919">MTIRFDNVSYTYQKGTPYQHQAIHDVNTEFEQGKYYAIVGQTGSGKSTLIQNINALLKPTTGTVTVDDITITHKTKDKYIRPVRKRIGMVFQFPESQLFEDTVEREMIFGPKNFKMNLDEAKNYAHRLLMDLGFSRDVMSQSPFQMSGGQMRKIAIVSILAMNPDIIVVDEPTAGLDPQSKRQVMRLLKSLQTDENKAIILISHDMNEVARYADEVIVMKEGSIVSQTSPKELFKDKKKLADWHIGLPEIVQLQYDFEQKYQTKLKDIALTEEAFVSLYKEWQHEK</sequence>
<feature type="chain" id="PRO_0000092062" description="Energy-coupling factor transporter ATP-binding protein EcfA2">
    <location>
        <begin position="1"/>
        <end position="286"/>
    </location>
</feature>
<feature type="domain" description="ABC transporter" evidence="1">
    <location>
        <begin position="3"/>
        <end position="246"/>
    </location>
</feature>
<feature type="binding site" evidence="1">
    <location>
        <begin position="40"/>
        <end position="47"/>
    </location>
    <ligand>
        <name>ATP</name>
        <dbReference type="ChEBI" id="CHEBI:30616"/>
    </ligand>
</feature>
<dbReference type="EC" id="7.-.-.-" evidence="1"/>
<dbReference type="EMBL" id="CP000046">
    <property type="protein sequence ID" value="AAW37085.1"/>
    <property type="molecule type" value="Genomic_DNA"/>
</dbReference>
<dbReference type="RefSeq" id="WP_000155386.1">
    <property type="nucleotide sequence ID" value="NZ_JBGOFO010000004.1"/>
</dbReference>
<dbReference type="SMR" id="Q5HDY7"/>
<dbReference type="KEGG" id="sac:SACOL2210"/>
<dbReference type="HOGENOM" id="CLU_000604_1_22_9"/>
<dbReference type="Proteomes" id="UP000000530">
    <property type="component" value="Chromosome"/>
</dbReference>
<dbReference type="GO" id="GO:0043190">
    <property type="term" value="C:ATP-binding cassette (ABC) transporter complex"/>
    <property type="evidence" value="ECO:0007669"/>
    <property type="project" value="TreeGrafter"/>
</dbReference>
<dbReference type="GO" id="GO:0005524">
    <property type="term" value="F:ATP binding"/>
    <property type="evidence" value="ECO:0007669"/>
    <property type="project" value="UniProtKB-KW"/>
</dbReference>
<dbReference type="GO" id="GO:0016887">
    <property type="term" value="F:ATP hydrolysis activity"/>
    <property type="evidence" value="ECO:0007669"/>
    <property type="project" value="InterPro"/>
</dbReference>
<dbReference type="GO" id="GO:0042626">
    <property type="term" value="F:ATPase-coupled transmembrane transporter activity"/>
    <property type="evidence" value="ECO:0007669"/>
    <property type="project" value="TreeGrafter"/>
</dbReference>
<dbReference type="CDD" id="cd03225">
    <property type="entry name" value="ABC_cobalt_CbiO_domain1"/>
    <property type="match status" value="1"/>
</dbReference>
<dbReference type="FunFam" id="3.40.50.300:FF:000224">
    <property type="entry name" value="Energy-coupling factor transporter ATP-binding protein EcfA"/>
    <property type="match status" value="1"/>
</dbReference>
<dbReference type="Gene3D" id="3.40.50.300">
    <property type="entry name" value="P-loop containing nucleotide triphosphate hydrolases"/>
    <property type="match status" value="1"/>
</dbReference>
<dbReference type="InterPro" id="IPR003593">
    <property type="entry name" value="AAA+_ATPase"/>
</dbReference>
<dbReference type="InterPro" id="IPR003439">
    <property type="entry name" value="ABC_transporter-like_ATP-bd"/>
</dbReference>
<dbReference type="InterPro" id="IPR017871">
    <property type="entry name" value="ABC_transporter-like_CS"/>
</dbReference>
<dbReference type="InterPro" id="IPR015856">
    <property type="entry name" value="ABC_transpr_CbiO/EcfA_su"/>
</dbReference>
<dbReference type="InterPro" id="IPR050095">
    <property type="entry name" value="ECF_ABC_transporter_ATP-bd"/>
</dbReference>
<dbReference type="InterPro" id="IPR030946">
    <property type="entry name" value="EcfA2"/>
</dbReference>
<dbReference type="InterPro" id="IPR027417">
    <property type="entry name" value="P-loop_NTPase"/>
</dbReference>
<dbReference type="NCBIfam" id="TIGR04521">
    <property type="entry name" value="ECF_ATPase_2"/>
    <property type="match status" value="1"/>
</dbReference>
<dbReference type="NCBIfam" id="NF010166">
    <property type="entry name" value="PRK13646.1"/>
    <property type="match status" value="1"/>
</dbReference>
<dbReference type="PANTHER" id="PTHR43553:SF27">
    <property type="entry name" value="ENERGY-COUPLING FACTOR TRANSPORTER ATP-BINDING PROTEIN ECFA2"/>
    <property type="match status" value="1"/>
</dbReference>
<dbReference type="PANTHER" id="PTHR43553">
    <property type="entry name" value="HEAVY METAL TRANSPORTER"/>
    <property type="match status" value="1"/>
</dbReference>
<dbReference type="Pfam" id="PF00005">
    <property type="entry name" value="ABC_tran"/>
    <property type="match status" value="1"/>
</dbReference>
<dbReference type="SMART" id="SM00382">
    <property type="entry name" value="AAA"/>
    <property type="match status" value="1"/>
</dbReference>
<dbReference type="SUPFAM" id="SSF52540">
    <property type="entry name" value="P-loop containing nucleoside triphosphate hydrolases"/>
    <property type="match status" value="1"/>
</dbReference>
<dbReference type="PROSITE" id="PS00211">
    <property type="entry name" value="ABC_TRANSPORTER_1"/>
    <property type="match status" value="1"/>
</dbReference>
<dbReference type="PROSITE" id="PS50893">
    <property type="entry name" value="ABC_TRANSPORTER_2"/>
    <property type="match status" value="1"/>
</dbReference>
<dbReference type="PROSITE" id="PS51246">
    <property type="entry name" value="CBIO"/>
    <property type="match status" value="1"/>
</dbReference>